<evidence type="ECO:0000255" key="1">
    <source>
        <dbReference type="HAMAP-Rule" id="MF_01151"/>
    </source>
</evidence>
<evidence type="ECO:0000256" key="2">
    <source>
        <dbReference type="SAM" id="MobiDB-lite"/>
    </source>
</evidence>
<organism>
    <name type="scientific">Treponema pallidum (strain Nichols)</name>
    <dbReference type="NCBI Taxonomy" id="243276"/>
    <lineage>
        <taxon>Bacteria</taxon>
        <taxon>Pseudomonadati</taxon>
        <taxon>Spirochaetota</taxon>
        <taxon>Spirochaetia</taxon>
        <taxon>Spirochaetales</taxon>
        <taxon>Treponemataceae</taxon>
        <taxon>Treponema</taxon>
    </lineage>
</organism>
<protein>
    <recommendedName>
        <fullName evidence="1">Protein GrpE</fullName>
    </recommendedName>
    <alternativeName>
        <fullName evidence="1">HSP-70 cofactor</fullName>
    </alternativeName>
</protein>
<proteinExistence type="inferred from homology"/>
<gene>
    <name evidence="1" type="primary">grpE</name>
    <name type="ordered locus">TP_0215</name>
</gene>
<accession>O83245</accession>
<sequence length="220" mass="24207">MCGGDVQGQGVASGCDEALERADSLRASDPVPVESGEGSVPGEHSQELETGASEETLRERVNVLQEQYLRKAADLENYRKRALRERQEAVEHAYAALLADIVAVLDDFDRAIEAADHASSTEVEASSAFREGVLMIRKQLSSVLETKYGLEYYPVLGERFDPNLHEALSMSPSASVHEKIVGAELQKGYRVRNRILRHAKVMVLTPEEQTEPDRGDGPSE</sequence>
<comment type="function">
    <text evidence="1">Participates actively in the response to hyperosmotic and heat shock by preventing the aggregation of stress-denatured proteins, in association with DnaK and GrpE. It is the nucleotide exchange factor for DnaK and may function as a thermosensor. Unfolded proteins bind initially to DnaJ; upon interaction with the DnaJ-bound protein, DnaK hydrolyzes its bound ATP, resulting in the formation of a stable complex. GrpE releases ADP from DnaK; ATP binding to DnaK triggers the release of the substrate protein, thus completing the reaction cycle. Several rounds of ATP-dependent interactions between DnaJ, DnaK and GrpE are required for fully efficient folding.</text>
</comment>
<comment type="subunit">
    <text evidence="1">Homodimer.</text>
</comment>
<comment type="subcellular location">
    <subcellularLocation>
        <location evidence="1">Cytoplasm</location>
    </subcellularLocation>
</comment>
<comment type="similarity">
    <text evidence="1">Belongs to the GrpE family.</text>
</comment>
<dbReference type="EMBL" id="AE000520">
    <property type="protein sequence ID" value="AAC65203.1"/>
    <property type="molecule type" value="Genomic_DNA"/>
</dbReference>
<dbReference type="PIR" id="E71352">
    <property type="entry name" value="E71352"/>
</dbReference>
<dbReference type="RefSeq" id="WP_010881663.1">
    <property type="nucleotide sequence ID" value="NC_021490.2"/>
</dbReference>
<dbReference type="SMR" id="O83245"/>
<dbReference type="STRING" id="243276.TP_0215"/>
<dbReference type="EnsemblBacteria" id="AAC65203">
    <property type="protein sequence ID" value="AAC65203"/>
    <property type="gene ID" value="TP_0215"/>
</dbReference>
<dbReference type="KEGG" id="tpa:TP_0215"/>
<dbReference type="KEGG" id="tpw:TPANIC_0215"/>
<dbReference type="eggNOG" id="COG0576">
    <property type="taxonomic scope" value="Bacteria"/>
</dbReference>
<dbReference type="HOGENOM" id="CLU_057217_5_2_12"/>
<dbReference type="OrthoDB" id="9812586at2"/>
<dbReference type="Proteomes" id="UP000000811">
    <property type="component" value="Chromosome"/>
</dbReference>
<dbReference type="GO" id="GO:0005737">
    <property type="term" value="C:cytoplasm"/>
    <property type="evidence" value="ECO:0007669"/>
    <property type="project" value="UniProtKB-SubCell"/>
</dbReference>
<dbReference type="GO" id="GO:0000774">
    <property type="term" value="F:adenyl-nucleotide exchange factor activity"/>
    <property type="evidence" value="ECO:0007669"/>
    <property type="project" value="InterPro"/>
</dbReference>
<dbReference type="GO" id="GO:0042803">
    <property type="term" value="F:protein homodimerization activity"/>
    <property type="evidence" value="ECO:0007669"/>
    <property type="project" value="InterPro"/>
</dbReference>
<dbReference type="GO" id="GO:0051087">
    <property type="term" value="F:protein-folding chaperone binding"/>
    <property type="evidence" value="ECO:0007669"/>
    <property type="project" value="InterPro"/>
</dbReference>
<dbReference type="GO" id="GO:0051082">
    <property type="term" value="F:unfolded protein binding"/>
    <property type="evidence" value="ECO:0007669"/>
    <property type="project" value="TreeGrafter"/>
</dbReference>
<dbReference type="GO" id="GO:0006457">
    <property type="term" value="P:protein folding"/>
    <property type="evidence" value="ECO:0007669"/>
    <property type="project" value="InterPro"/>
</dbReference>
<dbReference type="CDD" id="cd00446">
    <property type="entry name" value="GrpE"/>
    <property type="match status" value="1"/>
</dbReference>
<dbReference type="Gene3D" id="3.90.20.20">
    <property type="match status" value="1"/>
</dbReference>
<dbReference type="Gene3D" id="2.30.22.10">
    <property type="entry name" value="Head domain of nucleotide exchange factor GrpE"/>
    <property type="match status" value="1"/>
</dbReference>
<dbReference type="HAMAP" id="MF_01151">
    <property type="entry name" value="GrpE"/>
    <property type="match status" value="1"/>
</dbReference>
<dbReference type="InterPro" id="IPR000740">
    <property type="entry name" value="GrpE"/>
</dbReference>
<dbReference type="InterPro" id="IPR013805">
    <property type="entry name" value="GrpE_coiled_coil"/>
</dbReference>
<dbReference type="InterPro" id="IPR009012">
    <property type="entry name" value="GrpE_head"/>
</dbReference>
<dbReference type="PANTHER" id="PTHR21237">
    <property type="entry name" value="GRPE PROTEIN"/>
    <property type="match status" value="1"/>
</dbReference>
<dbReference type="PANTHER" id="PTHR21237:SF23">
    <property type="entry name" value="GRPE PROTEIN HOMOLOG, MITOCHONDRIAL"/>
    <property type="match status" value="1"/>
</dbReference>
<dbReference type="Pfam" id="PF01025">
    <property type="entry name" value="GrpE"/>
    <property type="match status" value="1"/>
</dbReference>
<dbReference type="PRINTS" id="PR00773">
    <property type="entry name" value="GRPEPROTEIN"/>
</dbReference>
<dbReference type="SUPFAM" id="SSF58014">
    <property type="entry name" value="Coiled-coil domain of nucleotide exchange factor GrpE"/>
    <property type="match status" value="1"/>
</dbReference>
<dbReference type="SUPFAM" id="SSF51064">
    <property type="entry name" value="Head domain of nucleotide exchange factor GrpE"/>
    <property type="match status" value="1"/>
</dbReference>
<dbReference type="PROSITE" id="PS01071">
    <property type="entry name" value="GRPE"/>
    <property type="match status" value="1"/>
</dbReference>
<reference key="1">
    <citation type="journal article" date="1998" name="Science">
        <title>Complete genome sequence of Treponema pallidum, the syphilis spirochete.</title>
        <authorList>
            <person name="Fraser C.M."/>
            <person name="Norris S.J."/>
            <person name="Weinstock G.M."/>
            <person name="White O."/>
            <person name="Sutton G.G."/>
            <person name="Dodson R.J."/>
            <person name="Gwinn M.L."/>
            <person name="Hickey E.K."/>
            <person name="Clayton R.A."/>
            <person name="Ketchum K.A."/>
            <person name="Sodergren E."/>
            <person name="Hardham J.M."/>
            <person name="McLeod M.P."/>
            <person name="Salzberg S.L."/>
            <person name="Peterson J.D."/>
            <person name="Khalak H.G."/>
            <person name="Richardson D.L."/>
            <person name="Howell J.K."/>
            <person name="Chidambaram M."/>
            <person name="Utterback T.R."/>
            <person name="McDonald L.A."/>
            <person name="Artiach P."/>
            <person name="Bowman C."/>
            <person name="Cotton M.D."/>
            <person name="Fujii C."/>
            <person name="Garland S.A."/>
            <person name="Hatch B."/>
            <person name="Horst K."/>
            <person name="Roberts K.M."/>
            <person name="Sandusky M."/>
            <person name="Weidman J.F."/>
            <person name="Smith H.O."/>
            <person name="Venter J.C."/>
        </authorList>
    </citation>
    <scope>NUCLEOTIDE SEQUENCE [LARGE SCALE GENOMIC DNA]</scope>
    <source>
        <strain>Nichols</strain>
    </source>
</reference>
<keyword id="KW-0143">Chaperone</keyword>
<keyword id="KW-0963">Cytoplasm</keyword>
<keyword id="KW-1185">Reference proteome</keyword>
<keyword id="KW-0346">Stress response</keyword>
<name>GRPE_TREPA</name>
<feature type="chain" id="PRO_0000113887" description="Protein GrpE">
    <location>
        <begin position="1"/>
        <end position="220"/>
    </location>
</feature>
<feature type="region of interest" description="Disordered" evidence="2">
    <location>
        <begin position="1"/>
        <end position="55"/>
    </location>
</feature>